<comment type="function">
    <text>Required for maximal bacterial cellulose synthesis. It may be involved in the formation of a membrane complex for extrusion of the cellulose product.</text>
</comment>
<comment type="pathway">
    <text>Glycan metabolism; bacterial cellulose biosynthesis.</text>
</comment>
<comment type="subcellular location">
    <subcellularLocation>
        <location evidence="3">Cell outer membrane</location>
        <topology evidence="3">Peripheral membrane protein</topology>
    </subcellularLocation>
</comment>
<comment type="similarity">
    <text evidence="3">Belongs to the AcsC/BcsC family.</text>
</comment>
<proteinExistence type="inferred from homology"/>
<name>BCSC1_KOMXY</name>
<gene>
    <name type="primary">bcsC</name>
</gene>
<evidence type="ECO:0000255" key="1"/>
<evidence type="ECO:0000256" key="2">
    <source>
        <dbReference type="SAM" id="MobiDB-lite"/>
    </source>
</evidence>
<evidence type="ECO:0000305" key="3"/>
<dbReference type="EMBL" id="M37202">
    <property type="protein sequence ID" value="AAA21886.1"/>
    <property type="molecule type" value="Genomic_DNA"/>
</dbReference>
<dbReference type="PIR" id="C43735">
    <property type="entry name" value="C43735"/>
</dbReference>
<dbReference type="RefSeq" id="WP_308720067.1">
    <property type="nucleotide sequence ID" value="NZ_JARWSK010000003.1"/>
</dbReference>
<dbReference type="STRING" id="1220579.GCA_001571345_00312"/>
<dbReference type="UniPathway" id="UPA00694"/>
<dbReference type="GO" id="GO:0009279">
    <property type="term" value="C:cell outer membrane"/>
    <property type="evidence" value="ECO:0007669"/>
    <property type="project" value="UniProtKB-SubCell"/>
</dbReference>
<dbReference type="GO" id="GO:0030244">
    <property type="term" value="P:cellulose biosynthetic process"/>
    <property type="evidence" value="ECO:0007669"/>
    <property type="project" value="UniProtKB-KW"/>
</dbReference>
<dbReference type="GO" id="GO:0006011">
    <property type="term" value="P:UDP-alpha-D-glucose metabolic process"/>
    <property type="evidence" value="ECO:0007669"/>
    <property type="project" value="InterPro"/>
</dbReference>
<dbReference type="Gene3D" id="1.25.40.10">
    <property type="entry name" value="Tetratricopeptide repeat domain"/>
    <property type="match status" value="3"/>
</dbReference>
<dbReference type="InterPro" id="IPR008410">
    <property type="entry name" value="BCSC_C"/>
</dbReference>
<dbReference type="InterPro" id="IPR003921">
    <property type="entry name" value="Cell_synth_C"/>
</dbReference>
<dbReference type="InterPro" id="IPR051012">
    <property type="entry name" value="CellSynth/LPSAsmb/PSIAsmb"/>
</dbReference>
<dbReference type="InterPro" id="IPR011990">
    <property type="entry name" value="TPR-like_helical_dom_sf"/>
</dbReference>
<dbReference type="InterPro" id="IPR019734">
    <property type="entry name" value="TPR_rpt"/>
</dbReference>
<dbReference type="PANTHER" id="PTHR45586:SF1">
    <property type="entry name" value="LIPOPOLYSACCHARIDE ASSEMBLY PROTEIN B"/>
    <property type="match status" value="1"/>
</dbReference>
<dbReference type="PANTHER" id="PTHR45586">
    <property type="entry name" value="TPR REPEAT-CONTAINING PROTEIN PA4667"/>
    <property type="match status" value="1"/>
</dbReference>
<dbReference type="Pfam" id="PF05420">
    <property type="entry name" value="BCSC_C"/>
    <property type="match status" value="1"/>
</dbReference>
<dbReference type="Pfam" id="PF14559">
    <property type="entry name" value="TPR_19"/>
    <property type="match status" value="3"/>
</dbReference>
<dbReference type="PRINTS" id="PR01441">
    <property type="entry name" value="CELLSNTHASEC"/>
</dbReference>
<dbReference type="SMART" id="SM00028">
    <property type="entry name" value="TPR"/>
    <property type="match status" value="6"/>
</dbReference>
<dbReference type="SUPFAM" id="SSF48452">
    <property type="entry name" value="TPR-like"/>
    <property type="match status" value="3"/>
</dbReference>
<dbReference type="PROSITE" id="PS50005">
    <property type="entry name" value="TPR"/>
    <property type="match status" value="7"/>
</dbReference>
<dbReference type="PROSITE" id="PS50293">
    <property type="entry name" value="TPR_REGION"/>
    <property type="match status" value="4"/>
</dbReference>
<reference key="1">
    <citation type="journal article" date="1990" name="Proc. Natl. Acad. Sci. U.S.A.">
        <title>Genetic organization of the cellulose synthase operon in Acetobacter xylinum.</title>
        <authorList>
            <person name="Wong H.C."/>
            <person name="Fear A.L."/>
            <person name="Calhoon R.D."/>
            <person name="Eichinger G.H."/>
            <person name="Mayer R."/>
            <person name="Amikam D."/>
            <person name="Benziman M."/>
            <person name="Gelfand D.H."/>
            <person name="Meade J.H."/>
            <person name="Emerick A.W."/>
            <person name="Bruner R."/>
            <person name="Ben-Bassat A."/>
            <person name="Tal R."/>
        </authorList>
    </citation>
    <scope>NUCLEOTIDE SEQUENCE [GENOMIC DNA]</scope>
    <source>
        <strain>1306-3</strain>
    </source>
</reference>
<protein>
    <recommendedName>
        <fullName>Cellulose synthase operon protein C</fullName>
    </recommendedName>
</protein>
<accession>P19450</accession>
<organism>
    <name type="scientific">Komagataeibacter xylinus</name>
    <name type="common">Gluconacetobacter xylinus</name>
    <dbReference type="NCBI Taxonomy" id="28448"/>
    <lineage>
        <taxon>Bacteria</taxon>
        <taxon>Pseudomonadati</taxon>
        <taxon>Pseudomonadota</taxon>
        <taxon>Alphaproteobacteria</taxon>
        <taxon>Acetobacterales</taxon>
        <taxon>Acetobacteraceae</taxon>
        <taxon>Komagataeibacter</taxon>
    </lineage>
</organism>
<feature type="signal peptide" evidence="1">
    <location>
        <begin position="1"/>
        <end position="46"/>
    </location>
</feature>
<feature type="chain" id="PRO_0000035686" description="Cellulose synthase operon protein C">
    <location>
        <begin position="47"/>
        <end position="1319"/>
    </location>
</feature>
<feature type="repeat" description="TPR 1">
    <location>
        <begin position="49"/>
        <end position="82"/>
    </location>
</feature>
<feature type="repeat" description="TPR 2">
    <location>
        <begin position="84"/>
        <end position="116"/>
    </location>
</feature>
<feature type="repeat" description="TPR 3">
    <location>
        <begin position="291"/>
        <end position="324"/>
    </location>
</feature>
<feature type="repeat" description="TPR 4">
    <location>
        <begin position="325"/>
        <end position="358"/>
    </location>
</feature>
<feature type="repeat" description="TPR 5">
    <location>
        <begin position="405"/>
        <end position="438"/>
    </location>
</feature>
<feature type="repeat" description="TPR 6">
    <location>
        <begin position="557"/>
        <end position="590"/>
    </location>
</feature>
<feature type="repeat" description="TPR 7">
    <location>
        <begin position="701"/>
        <end position="734"/>
    </location>
</feature>
<feature type="repeat" description="TPR 8">
    <location>
        <begin position="736"/>
        <end position="768"/>
    </location>
</feature>
<feature type="repeat" description="TPR 9">
    <location>
        <begin position="1059"/>
        <end position="1094"/>
    </location>
</feature>
<feature type="region of interest" description="Disordered" evidence="2">
    <location>
        <begin position="841"/>
        <end position="890"/>
    </location>
</feature>
<feature type="compositionally biased region" description="Low complexity" evidence="2">
    <location>
        <begin position="841"/>
        <end position="855"/>
    </location>
</feature>
<sequence>MNRRYVLSLSGALLASSCMTVLVAVPVARAQQASTAMTTAATSATAAPRQILLQQARFWLQQQQYDNARQALQNAERIAPNSPDVLEVLGEYQTAIGNREAAADTLRHLQQVAPGSAAAGNLNDLLSERAISQSDLSQIRSLAGSGQNAQAVAGYQKLFHGGKPPHSLAVEYYQTMAGVPAQWDQARAGLAGVVASNPQDYRAQLAFAQALTYNTSTRMEGLTRLKDLQSFRSQAPVEAAAAAQSYRQTLSWLPVNPETQPLMEQWLSAHPNDTALREHMLHPPGGPPDKAGLARQAGYQQLNAGRLAAAEQSFQSALQINSHDADSLGGMGLVSMRQGDTAEARRYFEEAMAADPKTADRWRPALAGMAVSGEYASVRQLIAAHQYTEAKQQLATLARQPGQYTGATLMLADLQRSTGQIAAAEQEYRGILSREPNNQLALMGLARVDMAQGNTAEARQLLSRVGPQYASQVGEIEVSGLMAAASQTSDSARKVSILREAMAQAPRDPWVRINLANALQQQGDVAEAGRVMQPILANPVTAQDRQAGILYTYGSGNDAMTRQLLAGLSPADYSPAIRSIAEEMEIKQDLASRLSMVSNPVPLIREALTQPDPTGARGVAVADLFRQRGDMVHARMALRIASTRTIDLSPDQRLSYATEYMKISNPVAAARLLAPLGDGTGSATGSALLPEQVQTLQQLRMGISVAQSDLLNQRGDQAQAYDHLAPALQADPEATSPKLALARLYNGHGKPGKALEIDLAVLRHNPQDLDARQAAVQAAVNSDHNSLATRLAMDGVQESPMDARAWLAMAVADQADGHGQRTIEDLRRAYDLRLQQVEGTRAASGAGAAQEDALAPPSTNPFRPRGYGHQTELGAPVTGGSYSAEAASPDTSDQMLSSIAGQIRTLRENLAPSIDGGLGFRSRSGEHGMGRLTEANIPIVGRLPLQAGASALTFSITPTMIWSGNLNTGSVYDVPRYGTMMGVQAYNQYDSYTNAGRDQQRIAAGTAEAGFAPDVQFGNSWVRADVGASPIGFPITNVLGGVEFSPRVGPVTFRVSAERRSITNSVLSYGGLRDTNYNSALGRYARQVYGQALSKQWGSEWGGVVTNHFHGQVEATLGNTILYGGGGYAIQTGKNVQRNSEREAGIGANTLVWHNANMLVRIGVSLTYFGYAKNEDFYTYGQGGYFSPQSYYAATVPVRYAGQHKRLDWDVTGSVGYQVFHEHSAPFFPTSSLLQSGANTIASNYSASATPAEYLSEETVNSAYYPGDSIAGLTGGFNARVGYRFTRNVRLDLSGRYQKAGNWTESGAMISAHYLIMDQ</sequence>
<keyword id="KW-0998">Cell outer membrane</keyword>
<keyword id="KW-0135">Cellulose biosynthesis</keyword>
<keyword id="KW-0472">Membrane</keyword>
<keyword id="KW-0677">Repeat</keyword>
<keyword id="KW-0732">Signal</keyword>
<keyword id="KW-0802">TPR repeat</keyword>